<reference key="1">
    <citation type="submission" date="2005-08" db="EMBL/GenBank/DDBJ databases">
        <title>Complete sequence of Synechococcus sp. CC9902.</title>
        <authorList>
            <person name="Copeland A."/>
            <person name="Lucas S."/>
            <person name="Lapidus A."/>
            <person name="Barry K."/>
            <person name="Detter J.C."/>
            <person name="Glavina T."/>
            <person name="Hammon N."/>
            <person name="Israni S."/>
            <person name="Pitluck S."/>
            <person name="Martinez M."/>
            <person name="Schmutz J."/>
            <person name="Larimer F."/>
            <person name="Land M."/>
            <person name="Kyrpides N."/>
            <person name="Ivanova N."/>
            <person name="Richardson P."/>
        </authorList>
    </citation>
    <scope>NUCLEOTIDE SEQUENCE [LARGE SCALE GENOMIC DNA]</scope>
    <source>
        <strain>CC9902</strain>
    </source>
</reference>
<proteinExistence type="inferred from homology"/>
<accession>Q3B0W1</accession>
<organism>
    <name type="scientific">Synechococcus sp. (strain CC9902)</name>
    <dbReference type="NCBI Taxonomy" id="316279"/>
    <lineage>
        <taxon>Bacteria</taxon>
        <taxon>Bacillati</taxon>
        <taxon>Cyanobacteriota</taxon>
        <taxon>Cyanophyceae</taxon>
        <taxon>Synechococcales</taxon>
        <taxon>Synechococcaceae</taxon>
        <taxon>Synechococcus</taxon>
    </lineage>
</organism>
<name>GUAA_SYNS9</name>
<evidence type="ECO:0000255" key="1">
    <source>
        <dbReference type="HAMAP-Rule" id="MF_00344"/>
    </source>
</evidence>
<comment type="function">
    <text evidence="1">Catalyzes the synthesis of GMP from XMP.</text>
</comment>
<comment type="catalytic activity">
    <reaction evidence="1">
        <text>XMP + L-glutamine + ATP + H2O = GMP + L-glutamate + AMP + diphosphate + 2 H(+)</text>
        <dbReference type="Rhea" id="RHEA:11680"/>
        <dbReference type="ChEBI" id="CHEBI:15377"/>
        <dbReference type="ChEBI" id="CHEBI:15378"/>
        <dbReference type="ChEBI" id="CHEBI:29985"/>
        <dbReference type="ChEBI" id="CHEBI:30616"/>
        <dbReference type="ChEBI" id="CHEBI:33019"/>
        <dbReference type="ChEBI" id="CHEBI:57464"/>
        <dbReference type="ChEBI" id="CHEBI:58115"/>
        <dbReference type="ChEBI" id="CHEBI:58359"/>
        <dbReference type="ChEBI" id="CHEBI:456215"/>
        <dbReference type="EC" id="6.3.5.2"/>
    </reaction>
</comment>
<comment type="pathway">
    <text evidence="1">Purine metabolism; GMP biosynthesis; GMP from XMP (L-Gln route): step 1/1.</text>
</comment>
<comment type="subunit">
    <text evidence="1">Homodimer.</text>
</comment>
<dbReference type="EC" id="6.3.5.2" evidence="1"/>
<dbReference type="EMBL" id="CP000097">
    <property type="protein sequence ID" value="ABB25017.1"/>
    <property type="molecule type" value="Genomic_DNA"/>
</dbReference>
<dbReference type="RefSeq" id="WP_011358885.1">
    <property type="nucleotide sequence ID" value="NC_007513.1"/>
</dbReference>
<dbReference type="SMR" id="Q3B0W1"/>
<dbReference type="STRING" id="316279.Syncc9902_0042"/>
<dbReference type="MEROPS" id="C26.957"/>
<dbReference type="KEGG" id="sye:Syncc9902_0042"/>
<dbReference type="eggNOG" id="COG0518">
    <property type="taxonomic scope" value="Bacteria"/>
</dbReference>
<dbReference type="eggNOG" id="COG0519">
    <property type="taxonomic scope" value="Bacteria"/>
</dbReference>
<dbReference type="HOGENOM" id="CLU_014340_0_5_3"/>
<dbReference type="OrthoDB" id="9802219at2"/>
<dbReference type="UniPathway" id="UPA00189">
    <property type="reaction ID" value="UER00296"/>
</dbReference>
<dbReference type="Proteomes" id="UP000002712">
    <property type="component" value="Chromosome"/>
</dbReference>
<dbReference type="GO" id="GO:0005829">
    <property type="term" value="C:cytosol"/>
    <property type="evidence" value="ECO:0007669"/>
    <property type="project" value="TreeGrafter"/>
</dbReference>
<dbReference type="GO" id="GO:0005524">
    <property type="term" value="F:ATP binding"/>
    <property type="evidence" value="ECO:0007669"/>
    <property type="project" value="UniProtKB-UniRule"/>
</dbReference>
<dbReference type="GO" id="GO:0003921">
    <property type="term" value="F:GMP synthase activity"/>
    <property type="evidence" value="ECO:0007669"/>
    <property type="project" value="InterPro"/>
</dbReference>
<dbReference type="CDD" id="cd01742">
    <property type="entry name" value="GATase1_GMP_Synthase"/>
    <property type="match status" value="1"/>
</dbReference>
<dbReference type="CDD" id="cd01997">
    <property type="entry name" value="GMP_synthase_C"/>
    <property type="match status" value="1"/>
</dbReference>
<dbReference type="FunFam" id="3.30.300.10:FF:000002">
    <property type="entry name" value="GMP synthase [glutamine-hydrolyzing]"/>
    <property type="match status" value="1"/>
</dbReference>
<dbReference type="FunFam" id="3.40.50.620:FF:000001">
    <property type="entry name" value="GMP synthase [glutamine-hydrolyzing]"/>
    <property type="match status" value="1"/>
</dbReference>
<dbReference type="FunFam" id="3.40.50.880:FF:000001">
    <property type="entry name" value="GMP synthase [glutamine-hydrolyzing]"/>
    <property type="match status" value="1"/>
</dbReference>
<dbReference type="Gene3D" id="3.30.300.10">
    <property type="match status" value="1"/>
</dbReference>
<dbReference type="Gene3D" id="3.40.50.880">
    <property type="match status" value="1"/>
</dbReference>
<dbReference type="Gene3D" id="3.40.50.620">
    <property type="entry name" value="HUPs"/>
    <property type="match status" value="1"/>
</dbReference>
<dbReference type="HAMAP" id="MF_00344">
    <property type="entry name" value="GMP_synthase"/>
    <property type="match status" value="1"/>
</dbReference>
<dbReference type="InterPro" id="IPR029062">
    <property type="entry name" value="Class_I_gatase-like"/>
</dbReference>
<dbReference type="InterPro" id="IPR017926">
    <property type="entry name" value="GATASE"/>
</dbReference>
<dbReference type="InterPro" id="IPR001674">
    <property type="entry name" value="GMP_synth_C"/>
</dbReference>
<dbReference type="InterPro" id="IPR004739">
    <property type="entry name" value="GMP_synth_GATase"/>
</dbReference>
<dbReference type="InterPro" id="IPR022955">
    <property type="entry name" value="GMP_synthase"/>
</dbReference>
<dbReference type="InterPro" id="IPR025777">
    <property type="entry name" value="GMPS_ATP_PPase_dom"/>
</dbReference>
<dbReference type="InterPro" id="IPR014729">
    <property type="entry name" value="Rossmann-like_a/b/a_fold"/>
</dbReference>
<dbReference type="NCBIfam" id="TIGR00884">
    <property type="entry name" value="guaA_Cterm"/>
    <property type="match status" value="1"/>
</dbReference>
<dbReference type="NCBIfam" id="TIGR00888">
    <property type="entry name" value="guaA_Nterm"/>
    <property type="match status" value="1"/>
</dbReference>
<dbReference type="NCBIfam" id="NF000848">
    <property type="entry name" value="PRK00074.1"/>
    <property type="match status" value="1"/>
</dbReference>
<dbReference type="PANTHER" id="PTHR11922:SF2">
    <property type="entry name" value="GMP SYNTHASE [GLUTAMINE-HYDROLYZING]"/>
    <property type="match status" value="1"/>
</dbReference>
<dbReference type="PANTHER" id="PTHR11922">
    <property type="entry name" value="GMP SYNTHASE-RELATED"/>
    <property type="match status" value="1"/>
</dbReference>
<dbReference type="Pfam" id="PF00117">
    <property type="entry name" value="GATase"/>
    <property type="match status" value="1"/>
</dbReference>
<dbReference type="Pfam" id="PF00958">
    <property type="entry name" value="GMP_synt_C"/>
    <property type="match status" value="1"/>
</dbReference>
<dbReference type="PRINTS" id="PR00097">
    <property type="entry name" value="ANTSNTHASEII"/>
</dbReference>
<dbReference type="PRINTS" id="PR00099">
    <property type="entry name" value="CPSGATASE"/>
</dbReference>
<dbReference type="PRINTS" id="PR00096">
    <property type="entry name" value="GATASE"/>
</dbReference>
<dbReference type="SUPFAM" id="SSF52402">
    <property type="entry name" value="Adenine nucleotide alpha hydrolases-like"/>
    <property type="match status" value="1"/>
</dbReference>
<dbReference type="SUPFAM" id="SSF52317">
    <property type="entry name" value="Class I glutamine amidotransferase-like"/>
    <property type="match status" value="1"/>
</dbReference>
<dbReference type="SUPFAM" id="SSF54810">
    <property type="entry name" value="GMP synthetase C-terminal dimerisation domain"/>
    <property type="match status" value="1"/>
</dbReference>
<dbReference type="PROSITE" id="PS51273">
    <property type="entry name" value="GATASE_TYPE_1"/>
    <property type="match status" value="1"/>
</dbReference>
<dbReference type="PROSITE" id="PS51553">
    <property type="entry name" value="GMPS_ATP_PPASE"/>
    <property type="match status" value="1"/>
</dbReference>
<protein>
    <recommendedName>
        <fullName evidence="1">GMP synthase [glutamine-hydrolyzing]</fullName>
        <ecNumber evidence="1">6.3.5.2</ecNumber>
    </recommendedName>
    <alternativeName>
        <fullName evidence="1">GMP synthetase</fullName>
    </alternativeName>
    <alternativeName>
        <fullName evidence="1">Glutamine amidotransferase</fullName>
    </alternativeName>
</protein>
<feature type="chain" id="PRO_1000120441" description="GMP synthase [glutamine-hydrolyzing]">
    <location>
        <begin position="1"/>
        <end position="528"/>
    </location>
</feature>
<feature type="domain" description="Glutamine amidotransferase type-1" evidence="1">
    <location>
        <begin position="13"/>
        <end position="204"/>
    </location>
</feature>
<feature type="domain" description="GMPS ATP-PPase" evidence="1">
    <location>
        <begin position="205"/>
        <end position="403"/>
    </location>
</feature>
<feature type="active site" description="Nucleophile" evidence="1">
    <location>
        <position position="90"/>
    </location>
</feature>
<feature type="active site" evidence="1">
    <location>
        <position position="178"/>
    </location>
</feature>
<feature type="active site" evidence="1">
    <location>
        <position position="180"/>
    </location>
</feature>
<feature type="binding site" evidence="1">
    <location>
        <begin position="232"/>
        <end position="238"/>
    </location>
    <ligand>
        <name>ATP</name>
        <dbReference type="ChEBI" id="CHEBI:30616"/>
    </ligand>
</feature>
<gene>
    <name evidence="1" type="primary">guaA</name>
    <name type="ordered locus">Syncc9902_0042</name>
</gene>
<sequence>MSQPSSDGQRQPAIVILDFGSQYSELIARRVRETEVFSVVIGYSTTADELRRMAPKGIILSGGPSSVYAEHAPVCDPAIWDLGIPVLGVCYGMQLMVQQLGGAVEAATGKAEYGKAPLEVDDPTDLLNNVENGSTMWMSHGDSVKALPEGFVRLAHTANTPEAAVANLERKFYGVQFHPEVVHSTCGMALIRNFVNHICGCEQDWTTNAFIDEAVALVREQVGQKRVLLALSGGVDSSTLAFLLKKAIGDQLTCMFIDQGFMRKGEPEFLMEFFDQKFNINVEYINARKRFIDKLKGITDPEDKRKIIGTEFIRVFEEESKRLGPFDYLAQGTLYPDVIESAGTNVDPKTGERVAVKIKSHHNVGGLPKDLRFKLVEPLRKLFKDEVRKVGRNLGLPEEIVRRHPFPGPGLAIRILGEVTDEKLNCLRDADLIVREEIRDAGLYHDIWQAFAVLLPVRSVGVMGDQRTYAWPIVLRCVSSEDGMTADWSRLPYDLMERISNRIVNEVKGVNRVVMDITSKPPGTIEWE</sequence>
<keyword id="KW-0067">ATP-binding</keyword>
<keyword id="KW-0315">Glutamine amidotransferase</keyword>
<keyword id="KW-0332">GMP biosynthesis</keyword>
<keyword id="KW-0436">Ligase</keyword>
<keyword id="KW-0547">Nucleotide-binding</keyword>
<keyword id="KW-0658">Purine biosynthesis</keyword>
<keyword id="KW-1185">Reference proteome</keyword>